<protein>
    <recommendedName>
        <fullName>FBD-associated F-box protein At5g27750</fullName>
    </recommendedName>
</protein>
<accession>Q0V7P8</accession>
<accession>Q8LEE0</accession>
<feature type="chain" id="PRO_0000283147" description="FBD-associated F-box protein At5g27750">
    <location>
        <begin position="1"/>
        <end position="459"/>
    </location>
</feature>
<feature type="domain" description="F-box" evidence="1">
    <location>
        <begin position="4"/>
        <end position="50"/>
    </location>
</feature>
<feature type="domain" description="FBD">
    <location>
        <begin position="374"/>
        <end position="426"/>
    </location>
</feature>
<feature type="sequence conflict" description="In Ref. 3; AAM62702." evidence="2" ref="3">
    <original>L</original>
    <variation>V</variation>
    <location>
        <position position="159"/>
    </location>
</feature>
<feature type="sequence conflict" description="In Ref. 3; AAM62702." evidence="2" ref="3">
    <original>D</original>
    <variation>E</variation>
    <location>
        <position position="192"/>
    </location>
</feature>
<feature type="sequence conflict" description="In Ref. 3; AAM62702." evidence="2" ref="3">
    <original>H</original>
    <variation>D</variation>
    <location>
        <position position="202"/>
    </location>
</feature>
<feature type="sequence conflict" description="In Ref. 3; AAM62702." evidence="2" ref="3">
    <original>P</original>
    <variation>A</variation>
    <location>
        <position position="209"/>
    </location>
</feature>
<sequence length="459" mass="53038">MPGFDRISELPESLITQILLCLPTKDSVKTSVLSTRWKNLWLNVPGLDLTCSDFPFEDEEYEQVFINFIDRFLEFNPESRLQTFEVDYKRREIRGFKDRIGTAINRGIRLLDAVSSTMYWEEECIMYPYLEFMPLNLFTSKTLVTLKLRDSALNDPGLLSMPCLKFMILREVRWSGTMSLEKLVSGCPVLEDLTLVRTLICHIDDDELPVTRVRSRSLKTFYVPLAYGVGCRSRVPDKVLEIDAPGLENMTLKEDHFDGIVVKNLTSLFMIELNIKFAVDYRRSFDPEDLSKRNEIGDFLTGISRARHMIISQKTVKALESYSKVGSIPKFNNLSHLKAVFPSPLLPFLPAFLESFPNLKNLILKIAFAKDDETEELNLINVPRCIVSTLECVEIKGLFEWEEEEMKIARYFLENAAVLKKLTMSFIDYPRYASNSDVYEDLDKLTKRSQQCRIIVDDE</sequence>
<evidence type="ECO:0000255" key="1">
    <source>
        <dbReference type="PROSITE-ProRule" id="PRU00080"/>
    </source>
</evidence>
<evidence type="ECO:0000305" key="2"/>
<dbReference type="EMBL" id="AC069556">
    <property type="status" value="NOT_ANNOTATED_CDS"/>
    <property type="molecule type" value="Genomic_DNA"/>
</dbReference>
<dbReference type="EMBL" id="CP002688">
    <property type="protein sequence ID" value="AED93721.1"/>
    <property type="molecule type" value="Genomic_DNA"/>
</dbReference>
<dbReference type="EMBL" id="BT026522">
    <property type="protein sequence ID" value="ABH04629.1"/>
    <property type="molecule type" value="mRNA"/>
</dbReference>
<dbReference type="EMBL" id="AY085476">
    <property type="protein sequence ID" value="AAM62702.1"/>
    <property type="molecule type" value="mRNA"/>
</dbReference>
<dbReference type="RefSeq" id="NP_198127.1">
    <property type="nucleotide sequence ID" value="NM_122657.4"/>
</dbReference>
<dbReference type="FunCoup" id="Q0V7P8">
    <property type="interactions" value="284"/>
</dbReference>
<dbReference type="PaxDb" id="3702-AT5G27750.1"/>
<dbReference type="ProteomicsDB" id="230751"/>
<dbReference type="EnsemblPlants" id="AT5G27750.1">
    <property type="protein sequence ID" value="AT5G27750.1"/>
    <property type="gene ID" value="AT5G27750"/>
</dbReference>
<dbReference type="GeneID" id="832837"/>
<dbReference type="Gramene" id="AT5G27750.1">
    <property type="protein sequence ID" value="AT5G27750.1"/>
    <property type="gene ID" value="AT5G27750"/>
</dbReference>
<dbReference type="KEGG" id="ath:AT5G27750"/>
<dbReference type="Araport" id="AT5G27750"/>
<dbReference type="TAIR" id="AT5G27750"/>
<dbReference type="HOGENOM" id="CLU_010721_1_3_1"/>
<dbReference type="InParanoid" id="Q0V7P8"/>
<dbReference type="OMA" id="CEIVIRA"/>
<dbReference type="PhylomeDB" id="Q0V7P8"/>
<dbReference type="PRO" id="PR:Q0V7P8"/>
<dbReference type="Proteomes" id="UP000006548">
    <property type="component" value="Chromosome 5"/>
</dbReference>
<dbReference type="ExpressionAtlas" id="Q0V7P8">
    <property type="expression patterns" value="baseline and differential"/>
</dbReference>
<dbReference type="CDD" id="cd22160">
    <property type="entry name" value="F-box_AtFBL13-like"/>
    <property type="match status" value="1"/>
</dbReference>
<dbReference type="InterPro" id="IPR036047">
    <property type="entry name" value="F-box-like_dom_sf"/>
</dbReference>
<dbReference type="InterPro" id="IPR053781">
    <property type="entry name" value="F-box_AtFBL13-like"/>
</dbReference>
<dbReference type="InterPro" id="IPR001810">
    <property type="entry name" value="F-box_dom"/>
</dbReference>
<dbReference type="InterPro" id="IPR006566">
    <property type="entry name" value="FBD"/>
</dbReference>
<dbReference type="InterPro" id="IPR050232">
    <property type="entry name" value="FBL13/AtMIF1-like"/>
</dbReference>
<dbReference type="InterPro" id="IPR055411">
    <property type="entry name" value="LRR_FXL15/At3g58940/PEG3-like"/>
</dbReference>
<dbReference type="PANTHER" id="PTHR31900">
    <property type="entry name" value="F-BOX/RNI SUPERFAMILY PROTEIN-RELATED"/>
    <property type="match status" value="1"/>
</dbReference>
<dbReference type="PANTHER" id="PTHR31900:SF33">
    <property type="entry name" value="PROTEIN WITH RNI-LIKE_FBD-LIKE DOMAIN"/>
    <property type="match status" value="1"/>
</dbReference>
<dbReference type="Pfam" id="PF00646">
    <property type="entry name" value="F-box"/>
    <property type="match status" value="1"/>
</dbReference>
<dbReference type="Pfam" id="PF08387">
    <property type="entry name" value="FBD"/>
    <property type="match status" value="1"/>
</dbReference>
<dbReference type="Pfam" id="PF24758">
    <property type="entry name" value="LRR_At5g56370"/>
    <property type="match status" value="1"/>
</dbReference>
<dbReference type="SMART" id="SM00579">
    <property type="entry name" value="FBD"/>
    <property type="match status" value="1"/>
</dbReference>
<dbReference type="SMART" id="SM00256">
    <property type="entry name" value="FBOX"/>
    <property type="match status" value="1"/>
</dbReference>
<dbReference type="SUPFAM" id="SSF81383">
    <property type="entry name" value="F-box domain"/>
    <property type="match status" value="1"/>
</dbReference>
<dbReference type="SUPFAM" id="SSF52047">
    <property type="entry name" value="RNI-like"/>
    <property type="match status" value="1"/>
</dbReference>
<dbReference type="PROSITE" id="PS50181">
    <property type="entry name" value="FBOX"/>
    <property type="match status" value="1"/>
</dbReference>
<reference key="1">
    <citation type="journal article" date="2000" name="Nature">
        <title>Sequence and analysis of chromosome 5 of the plant Arabidopsis thaliana.</title>
        <authorList>
            <person name="Tabata S."/>
            <person name="Kaneko T."/>
            <person name="Nakamura Y."/>
            <person name="Kotani H."/>
            <person name="Kato T."/>
            <person name="Asamizu E."/>
            <person name="Miyajima N."/>
            <person name="Sasamoto S."/>
            <person name="Kimura T."/>
            <person name="Hosouchi T."/>
            <person name="Kawashima K."/>
            <person name="Kohara M."/>
            <person name="Matsumoto M."/>
            <person name="Matsuno A."/>
            <person name="Muraki A."/>
            <person name="Nakayama S."/>
            <person name="Nakazaki N."/>
            <person name="Naruo K."/>
            <person name="Okumura S."/>
            <person name="Shinpo S."/>
            <person name="Takeuchi C."/>
            <person name="Wada T."/>
            <person name="Watanabe A."/>
            <person name="Yamada M."/>
            <person name="Yasuda M."/>
            <person name="Sato S."/>
            <person name="de la Bastide M."/>
            <person name="Huang E."/>
            <person name="Spiegel L."/>
            <person name="Gnoj L."/>
            <person name="O'Shaughnessy A."/>
            <person name="Preston R."/>
            <person name="Habermann K."/>
            <person name="Murray J."/>
            <person name="Johnson D."/>
            <person name="Rohlfing T."/>
            <person name="Nelson J."/>
            <person name="Stoneking T."/>
            <person name="Pepin K."/>
            <person name="Spieth J."/>
            <person name="Sekhon M."/>
            <person name="Armstrong J."/>
            <person name="Becker M."/>
            <person name="Belter E."/>
            <person name="Cordum H."/>
            <person name="Cordes M."/>
            <person name="Courtney L."/>
            <person name="Courtney W."/>
            <person name="Dante M."/>
            <person name="Du H."/>
            <person name="Edwards J."/>
            <person name="Fryman J."/>
            <person name="Haakensen B."/>
            <person name="Lamar E."/>
            <person name="Latreille P."/>
            <person name="Leonard S."/>
            <person name="Meyer R."/>
            <person name="Mulvaney E."/>
            <person name="Ozersky P."/>
            <person name="Riley A."/>
            <person name="Strowmatt C."/>
            <person name="Wagner-McPherson C."/>
            <person name="Wollam A."/>
            <person name="Yoakum M."/>
            <person name="Bell M."/>
            <person name="Dedhia N."/>
            <person name="Parnell L."/>
            <person name="Shah R."/>
            <person name="Rodriguez M."/>
            <person name="Hoon See L."/>
            <person name="Vil D."/>
            <person name="Baker J."/>
            <person name="Kirchoff K."/>
            <person name="Toth K."/>
            <person name="King L."/>
            <person name="Bahret A."/>
            <person name="Miller B."/>
            <person name="Marra M.A."/>
            <person name="Martienssen R."/>
            <person name="McCombie W.R."/>
            <person name="Wilson R.K."/>
            <person name="Murphy G."/>
            <person name="Bancroft I."/>
            <person name="Volckaert G."/>
            <person name="Wambutt R."/>
            <person name="Duesterhoeft A."/>
            <person name="Stiekema W."/>
            <person name="Pohl T."/>
            <person name="Entian K.-D."/>
            <person name="Terryn N."/>
            <person name="Hartley N."/>
            <person name="Bent E."/>
            <person name="Johnson S."/>
            <person name="Langham S.-A."/>
            <person name="McCullagh B."/>
            <person name="Robben J."/>
            <person name="Grymonprez B."/>
            <person name="Zimmermann W."/>
            <person name="Ramsperger U."/>
            <person name="Wedler H."/>
            <person name="Balke K."/>
            <person name="Wedler E."/>
            <person name="Peters S."/>
            <person name="van Staveren M."/>
            <person name="Dirkse W."/>
            <person name="Mooijman P."/>
            <person name="Klein Lankhorst R."/>
            <person name="Weitzenegger T."/>
            <person name="Bothe G."/>
            <person name="Rose M."/>
            <person name="Hauf J."/>
            <person name="Berneiser S."/>
            <person name="Hempel S."/>
            <person name="Feldpausch M."/>
            <person name="Lamberth S."/>
            <person name="Villarroel R."/>
            <person name="Gielen J."/>
            <person name="Ardiles W."/>
            <person name="Bents O."/>
            <person name="Lemcke K."/>
            <person name="Kolesov G."/>
            <person name="Mayer K.F.X."/>
            <person name="Rudd S."/>
            <person name="Schoof H."/>
            <person name="Schueller C."/>
            <person name="Zaccaria P."/>
            <person name="Mewes H.-W."/>
            <person name="Bevan M."/>
            <person name="Fransz P.F."/>
        </authorList>
    </citation>
    <scope>NUCLEOTIDE SEQUENCE [LARGE SCALE GENOMIC DNA]</scope>
    <source>
        <strain>cv. Columbia</strain>
    </source>
</reference>
<reference key="2">
    <citation type="journal article" date="2017" name="Plant J.">
        <title>Araport11: a complete reannotation of the Arabidopsis thaliana reference genome.</title>
        <authorList>
            <person name="Cheng C.Y."/>
            <person name="Krishnakumar V."/>
            <person name="Chan A.P."/>
            <person name="Thibaud-Nissen F."/>
            <person name="Schobel S."/>
            <person name="Town C.D."/>
        </authorList>
    </citation>
    <scope>GENOME REANNOTATION</scope>
    <source>
        <strain>cv. Columbia</strain>
    </source>
</reference>
<reference key="3">
    <citation type="submission" date="2006-08" db="EMBL/GenBank/DDBJ databases">
        <title>Arabidopsis ORF clones.</title>
        <authorList>
            <person name="Quinitio C."/>
            <person name="Chen H."/>
            <person name="Kim C.J."/>
            <person name="Shinn P."/>
            <person name="Ecker J.R."/>
        </authorList>
    </citation>
    <scope>NUCLEOTIDE SEQUENCE [LARGE SCALE MRNA]</scope>
    <source>
        <strain>cv. Columbia</strain>
    </source>
</reference>
<reference key="4">
    <citation type="submission" date="2002-03" db="EMBL/GenBank/DDBJ databases">
        <title>Full-length cDNA from Arabidopsis thaliana.</title>
        <authorList>
            <person name="Brover V.V."/>
            <person name="Troukhan M.E."/>
            <person name="Alexandrov N.A."/>
            <person name="Lu Y.-P."/>
            <person name="Flavell R.B."/>
            <person name="Feldmann K.A."/>
        </authorList>
    </citation>
    <scope>NUCLEOTIDE SEQUENCE [LARGE SCALE MRNA]</scope>
</reference>
<reference key="5">
    <citation type="journal article" date="2007" name="Mol. Cell. Proteomics">
        <title>Multidimensional protein identification technology (MudPIT) analysis of ubiquitinated proteins in plants.</title>
        <authorList>
            <person name="Maor R."/>
            <person name="Jones A."/>
            <person name="Nuehse T.S."/>
            <person name="Studholme D.J."/>
            <person name="Peck S.C."/>
            <person name="Shirasu K."/>
        </authorList>
    </citation>
    <scope>IDENTIFICATION BY MASS SPECTROMETRY [LARGE SCALE ANALYSIS]</scope>
    <source>
        <strain>cv. Landsberg erecta</strain>
    </source>
</reference>
<organism>
    <name type="scientific">Arabidopsis thaliana</name>
    <name type="common">Mouse-ear cress</name>
    <dbReference type="NCBI Taxonomy" id="3702"/>
    <lineage>
        <taxon>Eukaryota</taxon>
        <taxon>Viridiplantae</taxon>
        <taxon>Streptophyta</taxon>
        <taxon>Embryophyta</taxon>
        <taxon>Tracheophyta</taxon>
        <taxon>Spermatophyta</taxon>
        <taxon>Magnoliopsida</taxon>
        <taxon>eudicotyledons</taxon>
        <taxon>Gunneridae</taxon>
        <taxon>Pentapetalae</taxon>
        <taxon>rosids</taxon>
        <taxon>malvids</taxon>
        <taxon>Brassicales</taxon>
        <taxon>Brassicaceae</taxon>
        <taxon>Camelineae</taxon>
        <taxon>Arabidopsis</taxon>
    </lineage>
</organism>
<keyword id="KW-1185">Reference proteome</keyword>
<proteinExistence type="evidence at protein level"/>
<name>FBD15_ARATH</name>
<gene>
    <name type="ordered locus">At5g27750</name>
    <name type="ORF">T1G16.80</name>
</gene>